<feature type="chain" id="PRO_0000245468" description="3-hydroxyanthranilate 3,4-dioxygenase">
    <location>
        <begin position="1"/>
        <end position="280"/>
    </location>
</feature>
<feature type="region of interest" description="Domain A (catalytic)" evidence="1">
    <location>
        <begin position="1"/>
        <end position="160"/>
    </location>
</feature>
<feature type="region of interest" description="Linker" evidence="1">
    <location>
        <begin position="161"/>
        <end position="177"/>
    </location>
</feature>
<feature type="region of interest" description="Domain B" evidence="1">
    <location>
        <begin position="178"/>
        <end position="280"/>
    </location>
</feature>
<feature type="binding site" evidence="1">
    <location>
        <position position="43"/>
    </location>
    <ligand>
        <name>O2</name>
        <dbReference type="ChEBI" id="CHEBI:15379"/>
    </ligand>
</feature>
<feature type="binding site" evidence="1">
    <location>
        <position position="47"/>
    </location>
    <ligand>
        <name>Fe cation</name>
        <dbReference type="ChEBI" id="CHEBI:24875"/>
        <note>catalytic</note>
    </ligand>
</feature>
<feature type="binding site" evidence="1">
    <location>
        <position position="53"/>
    </location>
    <ligand>
        <name>Fe cation</name>
        <dbReference type="ChEBI" id="CHEBI:24875"/>
        <note>catalytic</note>
    </ligand>
</feature>
<feature type="binding site" evidence="1">
    <location>
        <position position="53"/>
    </location>
    <ligand>
        <name>substrate</name>
    </ligand>
</feature>
<feature type="binding site" evidence="1">
    <location>
        <position position="91"/>
    </location>
    <ligand>
        <name>Fe cation</name>
        <dbReference type="ChEBI" id="CHEBI:24875"/>
        <note>catalytic</note>
    </ligand>
</feature>
<feature type="binding site" evidence="1">
    <location>
        <position position="95"/>
    </location>
    <ligand>
        <name>substrate</name>
    </ligand>
</feature>
<feature type="binding site" evidence="1">
    <location>
        <position position="105"/>
    </location>
    <ligand>
        <name>substrate</name>
    </ligand>
</feature>
<proteinExistence type="evidence at transcript level"/>
<organism>
    <name type="scientific">Xenopus tropicalis</name>
    <name type="common">Western clawed frog</name>
    <name type="synonym">Silurana tropicalis</name>
    <dbReference type="NCBI Taxonomy" id="8364"/>
    <lineage>
        <taxon>Eukaryota</taxon>
        <taxon>Metazoa</taxon>
        <taxon>Chordata</taxon>
        <taxon>Craniata</taxon>
        <taxon>Vertebrata</taxon>
        <taxon>Euteleostomi</taxon>
        <taxon>Amphibia</taxon>
        <taxon>Batrachia</taxon>
        <taxon>Anura</taxon>
        <taxon>Pipoidea</taxon>
        <taxon>Pipidae</taxon>
        <taxon>Xenopodinae</taxon>
        <taxon>Xenopus</taxon>
        <taxon>Silurana</taxon>
    </lineage>
</organism>
<keyword id="KW-0963">Cytoplasm</keyword>
<keyword id="KW-0223">Dioxygenase</keyword>
<keyword id="KW-0408">Iron</keyword>
<keyword id="KW-0479">Metal-binding</keyword>
<keyword id="KW-0560">Oxidoreductase</keyword>
<keyword id="KW-0662">Pyridine nucleotide biosynthesis</keyword>
<keyword id="KW-1185">Reference proteome</keyword>
<sequence>MAIPVNVKKWIDENREYFLPPVCNKLMQNHQLKVMFVGGPNQRKDYHIEEGEELFYQVQGDMCLKIVENGKHKDVHIKEGEMFLLPGRIPHSPQRYADTVGLVFERRRLDTEKDGLRYYVEGTTEVLFEKWFYCEDLGTQLAPIMKEFFSSEQYKSGKPDPAQPIGKMPFFLNTEQVMEPFSFQNWLNKHRLEINQKKRVSLFGHNQETKAVVYGSGESKDSKAQTDTWIWQLEGTSCVTLGNEVLKLGSGDSLLIPEKSLYSWIREDCSIALSTSQVPA</sequence>
<accession>Q6DIZ0</accession>
<name>3HAO_XENTR</name>
<dbReference type="EC" id="1.13.11.6" evidence="1"/>
<dbReference type="EMBL" id="BC075395">
    <property type="protein sequence ID" value="AAH75395.1"/>
    <property type="molecule type" value="mRNA"/>
</dbReference>
<dbReference type="RefSeq" id="NP_001006914.1">
    <property type="nucleotide sequence ID" value="NM_001006913.1"/>
</dbReference>
<dbReference type="RefSeq" id="XP_017949333.2">
    <property type="nucleotide sequence ID" value="XM_018093844.2"/>
</dbReference>
<dbReference type="SMR" id="Q6DIZ0"/>
<dbReference type="FunCoup" id="Q6DIZ0">
    <property type="interactions" value="816"/>
</dbReference>
<dbReference type="STRING" id="8364.ENSXETP00000021115"/>
<dbReference type="PaxDb" id="8364-ENSXETP00000061535"/>
<dbReference type="DNASU" id="448761"/>
<dbReference type="GeneID" id="448761"/>
<dbReference type="KEGG" id="xtr:448761"/>
<dbReference type="AGR" id="Xenbase:XB-GENE-5800903"/>
<dbReference type="CTD" id="23498"/>
<dbReference type="Xenbase" id="XB-GENE-5800903">
    <property type="gene designation" value="haao"/>
</dbReference>
<dbReference type="eggNOG" id="KOG3995">
    <property type="taxonomic scope" value="Eukaryota"/>
</dbReference>
<dbReference type="InParanoid" id="Q6DIZ0"/>
<dbReference type="OrthoDB" id="204928at2759"/>
<dbReference type="Reactome" id="R-XTR-71240">
    <property type="pathway name" value="Tryptophan catabolism"/>
</dbReference>
<dbReference type="UniPathway" id="UPA00253">
    <property type="reaction ID" value="UER00330"/>
</dbReference>
<dbReference type="Proteomes" id="UP000008143">
    <property type="component" value="Chromosome 5"/>
</dbReference>
<dbReference type="GO" id="GO:0005829">
    <property type="term" value="C:cytosol"/>
    <property type="evidence" value="ECO:0007669"/>
    <property type="project" value="UniProtKB-SubCell"/>
</dbReference>
<dbReference type="GO" id="GO:0000334">
    <property type="term" value="F:3-hydroxyanthranilate 3,4-dioxygenase activity"/>
    <property type="evidence" value="ECO:0000250"/>
    <property type="project" value="UniProtKB"/>
</dbReference>
<dbReference type="GO" id="GO:0008198">
    <property type="term" value="F:ferrous iron binding"/>
    <property type="evidence" value="ECO:0000250"/>
    <property type="project" value="UniProtKB"/>
</dbReference>
<dbReference type="GO" id="GO:0034354">
    <property type="term" value="P:'de novo' NAD biosynthetic process from L-tryptophan"/>
    <property type="evidence" value="ECO:0007669"/>
    <property type="project" value="UniProtKB-UniRule"/>
</dbReference>
<dbReference type="GO" id="GO:0043420">
    <property type="term" value="P:anthranilate metabolic process"/>
    <property type="evidence" value="ECO:0007669"/>
    <property type="project" value="UniProtKB-UniRule"/>
</dbReference>
<dbReference type="GO" id="GO:0006569">
    <property type="term" value="P:L-tryptophan catabolic process"/>
    <property type="evidence" value="ECO:0007669"/>
    <property type="project" value="UniProtKB-UniRule"/>
</dbReference>
<dbReference type="GO" id="GO:0009435">
    <property type="term" value="P:NAD biosynthetic process"/>
    <property type="evidence" value="ECO:0000250"/>
    <property type="project" value="UniProtKB"/>
</dbReference>
<dbReference type="GO" id="GO:0019805">
    <property type="term" value="P:quinolinate biosynthetic process"/>
    <property type="evidence" value="ECO:0000250"/>
    <property type="project" value="UniProtKB"/>
</dbReference>
<dbReference type="CDD" id="cd06123">
    <property type="entry name" value="cupin_HAO"/>
    <property type="match status" value="1"/>
</dbReference>
<dbReference type="FunFam" id="2.60.120.10:FF:000077">
    <property type="entry name" value="3-hydroxyanthranilate 3,4-dioxygenase"/>
    <property type="match status" value="1"/>
</dbReference>
<dbReference type="Gene3D" id="2.60.120.10">
    <property type="entry name" value="Jelly Rolls"/>
    <property type="match status" value="1"/>
</dbReference>
<dbReference type="HAMAP" id="MF_00825">
    <property type="entry name" value="3_HAO"/>
    <property type="match status" value="1"/>
</dbReference>
<dbReference type="InterPro" id="IPR010329">
    <property type="entry name" value="3hydroanth_dOase"/>
</dbReference>
<dbReference type="InterPro" id="IPR016700">
    <property type="entry name" value="3hydroanth_dOase_met"/>
</dbReference>
<dbReference type="InterPro" id="IPR014710">
    <property type="entry name" value="RmlC-like_jellyroll"/>
</dbReference>
<dbReference type="InterPro" id="IPR011051">
    <property type="entry name" value="RmlC_Cupin_sf"/>
</dbReference>
<dbReference type="NCBIfam" id="TIGR03037">
    <property type="entry name" value="anthran_nbaC"/>
    <property type="match status" value="1"/>
</dbReference>
<dbReference type="PANTHER" id="PTHR15497">
    <property type="entry name" value="3-HYDROXYANTHRANILATE 3,4-DIOXYGENASE"/>
    <property type="match status" value="1"/>
</dbReference>
<dbReference type="PANTHER" id="PTHR15497:SF1">
    <property type="entry name" value="3-HYDROXYANTHRANILATE 3,4-DIOXYGENASE"/>
    <property type="match status" value="1"/>
</dbReference>
<dbReference type="Pfam" id="PF06052">
    <property type="entry name" value="3-HAO"/>
    <property type="match status" value="1"/>
</dbReference>
<dbReference type="PIRSF" id="PIRSF017681">
    <property type="entry name" value="3hydroanth_dOase_animal"/>
    <property type="match status" value="1"/>
</dbReference>
<dbReference type="SUPFAM" id="SSF51182">
    <property type="entry name" value="RmlC-like cupins"/>
    <property type="match status" value="2"/>
</dbReference>
<protein>
    <recommendedName>
        <fullName evidence="1">3-hydroxyanthranilate 3,4-dioxygenase</fullName>
        <ecNumber evidence="1">1.13.11.6</ecNumber>
    </recommendedName>
    <alternativeName>
        <fullName evidence="1">3-hydroxyanthranilate oxygenase</fullName>
        <shortName evidence="1">3-HAO</shortName>
    </alternativeName>
    <alternativeName>
        <fullName evidence="1">3-hydroxyanthranilic acid dioxygenase</fullName>
        <shortName evidence="1">HAD</shortName>
    </alternativeName>
</protein>
<gene>
    <name type="primary">haao</name>
</gene>
<reference key="1">
    <citation type="submission" date="2004-06" db="EMBL/GenBank/DDBJ databases">
        <authorList>
            <consortium name="NIH - Xenopus Gene Collection (XGC) project"/>
        </authorList>
    </citation>
    <scope>NUCLEOTIDE SEQUENCE [LARGE SCALE MRNA]</scope>
</reference>
<comment type="function">
    <text evidence="1">Catalyzes the oxidative ring opening of 3-hydroxyanthranilate to 2-amino-3-carboxymuconate semialdehyde, which spontaneously cyclizes to quinolinate.</text>
</comment>
<comment type="catalytic activity">
    <reaction evidence="1">
        <text>3-hydroxyanthranilate + O2 = (2Z,4Z)-2-amino-3-carboxymuconate 6-semialdehyde</text>
        <dbReference type="Rhea" id="RHEA:17953"/>
        <dbReference type="ChEBI" id="CHEBI:15379"/>
        <dbReference type="ChEBI" id="CHEBI:36559"/>
        <dbReference type="ChEBI" id="CHEBI:77612"/>
        <dbReference type="EC" id="1.13.11.6"/>
    </reaction>
</comment>
<comment type="cofactor">
    <cofactor evidence="1">
        <name>Fe(2+)</name>
        <dbReference type="ChEBI" id="CHEBI:29033"/>
    </cofactor>
</comment>
<comment type="pathway">
    <text evidence="1">Cofactor biosynthesis; NAD(+) biosynthesis; quinolinate from L-kynurenine: step 3/3.</text>
</comment>
<comment type="subunit">
    <text evidence="1">Monomer.</text>
</comment>
<comment type="subcellular location">
    <subcellularLocation>
        <location evidence="1">Cytoplasm</location>
        <location evidence="1">Cytosol</location>
    </subcellularLocation>
</comment>
<comment type="similarity">
    <text evidence="1">Belongs to the 3-HAO family.</text>
</comment>
<evidence type="ECO:0000255" key="1">
    <source>
        <dbReference type="HAMAP-Rule" id="MF_03019"/>
    </source>
</evidence>